<name>MUG33_SCHPO</name>
<gene>
    <name type="primary">mug33</name>
    <name type="ORF">SPCC1739.10</name>
</gene>
<comment type="function">
    <text evidence="2">Has a role in meiosis.</text>
</comment>
<comment type="subcellular location">
    <subcellularLocation>
        <location evidence="3">Cytoplasm</location>
    </subcellularLocation>
    <text>Localizes to the barrier septum and the cell tip.</text>
</comment>
<proteinExistence type="evidence at protein level"/>
<dbReference type="EMBL" id="CU329672">
    <property type="protein sequence ID" value="CAA20784.1"/>
    <property type="molecule type" value="Genomic_DNA"/>
</dbReference>
<dbReference type="PIR" id="T41118">
    <property type="entry name" value="T41118"/>
</dbReference>
<dbReference type="RefSeq" id="NP_588418.1">
    <property type="nucleotide sequence ID" value="NM_001023409.2"/>
</dbReference>
<dbReference type="BioGRID" id="275947">
    <property type="interactions" value="48"/>
</dbReference>
<dbReference type="FunCoup" id="O74472">
    <property type="interactions" value="1"/>
</dbReference>
<dbReference type="STRING" id="284812.O74472"/>
<dbReference type="iPTMnet" id="O74472"/>
<dbReference type="PaxDb" id="4896-SPCC1739.10.1"/>
<dbReference type="EnsemblFungi" id="SPCC1739.10.1">
    <property type="protein sequence ID" value="SPCC1739.10.1:pep"/>
    <property type="gene ID" value="SPCC1739.10"/>
</dbReference>
<dbReference type="GeneID" id="2539381"/>
<dbReference type="KEGG" id="spo:2539381"/>
<dbReference type="PomBase" id="SPCC1739.10">
    <property type="gene designation" value="mug33"/>
</dbReference>
<dbReference type="VEuPathDB" id="FungiDB:SPCC1739.10"/>
<dbReference type="eggNOG" id="ENOG502QVGD">
    <property type="taxonomic scope" value="Eukaryota"/>
</dbReference>
<dbReference type="HOGENOM" id="CLU_831978_0_0_1"/>
<dbReference type="InParanoid" id="O74472"/>
<dbReference type="OMA" id="FADYSME"/>
<dbReference type="PRO" id="PR:O74472"/>
<dbReference type="Proteomes" id="UP000002485">
    <property type="component" value="Chromosome III"/>
</dbReference>
<dbReference type="GO" id="GO:0032153">
    <property type="term" value="C:cell division site"/>
    <property type="evidence" value="ECO:0000314"/>
    <property type="project" value="PomBase"/>
</dbReference>
<dbReference type="GO" id="GO:0051286">
    <property type="term" value="C:cell tip"/>
    <property type="evidence" value="ECO:0007005"/>
    <property type="project" value="PomBase"/>
</dbReference>
<dbReference type="GO" id="GO:0005737">
    <property type="term" value="C:cytoplasm"/>
    <property type="evidence" value="ECO:0007005"/>
    <property type="project" value="PomBase"/>
</dbReference>
<dbReference type="GO" id="GO:0030139">
    <property type="term" value="C:endocytic vesicle"/>
    <property type="evidence" value="ECO:0000314"/>
    <property type="project" value="PomBase"/>
</dbReference>
<dbReference type="GO" id="GO:0070382">
    <property type="term" value="C:exocytic vesicle"/>
    <property type="evidence" value="ECO:0000314"/>
    <property type="project" value="PomBase"/>
</dbReference>
<dbReference type="GO" id="GO:0035838">
    <property type="term" value="C:growing cell tip"/>
    <property type="evidence" value="ECO:0000315"/>
    <property type="project" value="PomBase"/>
</dbReference>
<dbReference type="GO" id="GO:0005886">
    <property type="term" value="C:plasma membrane"/>
    <property type="evidence" value="ECO:0000318"/>
    <property type="project" value="GO_Central"/>
</dbReference>
<dbReference type="GO" id="GO:0031520">
    <property type="term" value="C:plasma membrane of cell tip"/>
    <property type="evidence" value="ECO:0000314"/>
    <property type="project" value="PomBase"/>
</dbReference>
<dbReference type="GO" id="GO:0051321">
    <property type="term" value="P:meiotic cell cycle"/>
    <property type="evidence" value="ECO:0007669"/>
    <property type="project" value="UniProtKB-KW"/>
</dbReference>
<dbReference type="InterPro" id="IPR051380">
    <property type="entry name" value="pH-response_reg_palI/RIM9"/>
</dbReference>
<dbReference type="InterPro" id="IPR009571">
    <property type="entry name" value="SUR7/Rim9-like_fungi"/>
</dbReference>
<dbReference type="PANTHER" id="PTHR28013:SF6">
    <property type="entry name" value="MEIOTICALLY UP-REGULATED GENE 33 PROTEIN"/>
    <property type="match status" value="1"/>
</dbReference>
<dbReference type="PANTHER" id="PTHR28013">
    <property type="entry name" value="PROTEIN DCV1-RELATED"/>
    <property type="match status" value="1"/>
</dbReference>
<dbReference type="Pfam" id="PF06687">
    <property type="entry name" value="SUR7"/>
    <property type="match status" value="1"/>
</dbReference>
<keyword id="KW-0963">Cytoplasm</keyword>
<keyword id="KW-0469">Meiosis</keyword>
<keyword id="KW-1185">Reference proteome</keyword>
<feature type="chain" id="PRO_0000278497" description="Meiotically up-regulated gene 33 protein">
    <location>
        <begin position="1"/>
        <end position="336"/>
    </location>
</feature>
<feature type="region of interest" description="Disordered" evidence="1">
    <location>
        <begin position="232"/>
        <end position="336"/>
    </location>
</feature>
<feature type="compositionally biased region" description="Polar residues" evidence="1">
    <location>
        <begin position="250"/>
        <end position="262"/>
    </location>
</feature>
<reference key="1">
    <citation type="journal article" date="2002" name="Nature">
        <title>The genome sequence of Schizosaccharomyces pombe.</title>
        <authorList>
            <person name="Wood V."/>
            <person name="Gwilliam R."/>
            <person name="Rajandream M.A."/>
            <person name="Lyne M.H."/>
            <person name="Lyne R."/>
            <person name="Stewart A."/>
            <person name="Sgouros J.G."/>
            <person name="Peat N."/>
            <person name="Hayles J."/>
            <person name="Baker S.G."/>
            <person name="Basham D."/>
            <person name="Bowman S."/>
            <person name="Brooks K."/>
            <person name="Brown D."/>
            <person name="Brown S."/>
            <person name="Chillingworth T."/>
            <person name="Churcher C.M."/>
            <person name="Collins M."/>
            <person name="Connor R."/>
            <person name="Cronin A."/>
            <person name="Davis P."/>
            <person name="Feltwell T."/>
            <person name="Fraser A."/>
            <person name="Gentles S."/>
            <person name="Goble A."/>
            <person name="Hamlin N."/>
            <person name="Harris D.E."/>
            <person name="Hidalgo J."/>
            <person name="Hodgson G."/>
            <person name="Holroyd S."/>
            <person name="Hornsby T."/>
            <person name="Howarth S."/>
            <person name="Huckle E.J."/>
            <person name="Hunt S."/>
            <person name="Jagels K."/>
            <person name="James K.D."/>
            <person name="Jones L."/>
            <person name="Jones M."/>
            <person name="Leather S."/>
            <person name="McDonald S."/>
            <person name="McLean J."/>
            <person name="Mooney P."/>
            <person name="Moule S."/>
            <person name="Mungall K.L."/>
            <person name="Murphy L.D."/>
            <person name="Niblett D."/>
            <person name="Odell C."/>
            <person name="Oliver K."/>
            <person name="O'Neil S."/>
            <person name="Pearson D."/>
            <person name="Quail M.A."/>
            <person name="Rabbinowitsch E."/>
            <person name="Rutherford K.M."/>
            <person name="Rutter S."/>
            <person name="Saunders D."/>
            <person name="Seeger K."/>
            <person name="Sharp S."/>
            <person name="Skelton J."/>
            <person name="Simmonds M.N."/>
            <person name="Squares R."/>
            <person name="Squares S."/>
            <person name="Stevens K."/>
            <person name="Taylor K."/>
            <person name="Taylor R.G."/>
            <person name="Tivey A."/>
            <person name="Walsh S.V."/>
            <person name="Warren T."/>
            <person name="Whitehead S."/>
            <person name="Woodward J.R."/>
            <person name="Volckaert G."/>
            <person name="Aert R."/>
            <person name="Robben J."/>
            <person name="Grymonprez B."/>
            <person name="Weltjens I."/>
            <person name="Vanstreels E."/>
            <person name="Rieger M."/>
            <person name="Schaefer M."/>
            <person name="Mueller-Auer S."/>
            <person name="Gabel C."/>
            <person name="Fuchs M."/>
            <person name="Duesterhoeft A."/>
            <person name="Fritzc C."/>
            <person name="Holzer E."/>
            <person name="Moestl D."/>
            <person name="Hilbert H."/>
            <person name="Borzym K."/>
            <person name="Langer I."/>
            <person name="Beck A."/>
            <person name="Lehrach H."/>
            <person name="Reinhardt R."/>
            <person name="Pohl T.M."/>
            <person name="Eger P."/>
            <person name="Zimmermann W."/>
            <person name="Wedler H."/>
            <person name="Wambutt R."/>
            <person name="Purnelle B."/>
            <person name="Goffeau A."/>
            <person name="Cadieu E."/>
            <person name="Dreano S."/>
            <person name="Gloux S."/>
            <person name="Lelaure V."/>
            <person name="Mottier S."/>
            <person name="Galibert F."/>
            <person name="Aves S.J."/>
            <person name="Xiang Z."/>
            <person name="Hunt C."/>
            <person name="Moore K."/>
            <person name="Hurst S.M."/>
            <person name="Lucas M."/>
            <person name="Rochet M."/>
            <person name="Gaillardin C."/>
            <person name="Tallada V.A."/>
            <person name="Garzon A."/>
            <person name="Thode G."/>
            <person name="Daga R.R."/>
            <person name="Cruzado L."/>
            <person name="Jimenez J."/>
            <person name="Sanchez M."/>
            <person name="del Rey F."/>
            <person name="Benito J."/>
            <person name="Dominguez A."/>
            <person name="Revuelta J.L."/>
            <person name="Moreno S."/>
            <person name="Armstrong J."/>
            <person name="Forsburg S.L."/>
            <person name="Cerutti L."/>
            <person name="Lowe T."/>
            <person name="McCombie W.R."/>
            <person name="Paulsen I."/>
            <person name="Potashkin J."/>
            <person name="Shpakovski G.V."/>
            <person name="Ussery D."/>
            <person name="Barrell B.G."/>
            <person name="Nurse P."/>
        </authorList>
    </citation>
    <scope>NUCLEOTIDE SEQUENCE [LARGE SCALE GENOMIC DNA]</scope>
    <source>
        <strain>972 / ATCC 24843</strain>
    </source>
</reference>
<reference key="2">
    <citation type="journal article" date="2005" name="Curr. Biol.">
        <title>A large-scale screen in S. pombe identifies seven novel genes required for critical meiotic events.</title>
        <authorList>
            <person name="Martin-Castellanos C."/>
            <person name="Blanco M."/>
            <person name="Rozalen A.E."/>
            <person name="Perez-Hidalgo L."/>
            <person name="Garcia A.I."/>
            <person name="Conde F."/>
            <person name="Mata J."/>
            <person name="Ellermeier C."/>
            <person name="Davis L."/>
            <person name="San-Segundo P."/>
            <person name="Smith G.R."/>
            <person name="Moreno S."/>
        </authorList>
    </citation>
    <scope>FUNCTION IN MEIOSIS</scope>
</reference>
<reference key="3">
    <citation type="journal article" date="2006" name="Nat. Biotechnol.">
        <title>ORFeome cloning and global analysis of protein localization in the fission yeast Schizosaccharomyces pombe.</title>
        <authorList>
            <person name="Matsuyama A."/>
            <person name="Arai R."/>
            <person name="Yashiroda Y."/>
            <person name="Shirai A."/>
            <person name="Kamata A."/>
            <person name="Sekido S."/>
            <person name="Kobayashi Y."/>
            <person name="Hashimoto A."/>
            <person name="Hamamoto M."/>
            <person name="Hiraoka Y."/>
            <person name="Horinouchi S."/>
            <person name="Yoshida M."/>
        </authorList>
    </citation>
    <scope>SUBCELLULAR LOCATION [LARGE SCALE ANALYSIS]</scope>
</reference>
<accession>O74472</accession>
<evidence type="ECO:0000256" key="1">
    <source>
        <dbReference type="SAM" id="MobiDB-lite"/>
    </source>
</evidence>
<evidence type="ECO:0000269" key="2">
    <source>
    </source>
</evidence>
<evidence type="ECO:0000269" key="3">
    <source>
    </source>
</evidence>
<protein>
    <recommendedName>
        <fullName>Meiotically up-regulated gene 33 protein</fullName>
    </recommendedName>
</protein>
<organism>
    <name type="scientific">Schizosaccharomyces pombe (strain 972 / ATCC 24843)</name>
    <name type="common">Fission yeast</name>
    <dbReference type="NCBI Taxonomy" id="284812"/>
    <lineage>
        <taxon>Eukaryota</taxon>
        <taxon>Fungi</taxon>
        <taxon>Dikarya</taxon>
        <taxon>Ascomycota</taxon>
        <taxon>Taphrinomycotina</taxon>
        <taxon>Schizosaccharomycetes</taxon>
        <taxon>Schizosaccharomycetales</taxon>
        <taxon>Schizosaccharomycetaceae</taxon>
        <taxon>Schizosaccharomyces</taxon>
    </lineage>
</organism>
<sequence>MRIRSATPSLILLVIAIVFFVLAICTPPLANNLTLGKYGDVRFGVFGYCLNSNCSKPLVGYNSDYLDEHAKDGFRTSVIVRQRASYGLVIVPVSACICLISTIMTIFAHIGAIARSPGFFNVIGTITFFNIFITAIAFVICVITFVPHIQWPSWLVLANVGIQLIVLLLLLVARRQATRLQAKHLRRATSGSLGYNPYSLQNSSNIFSTSSRKGDLPKFSDYSAEKPMYDTISEDDGLKRGGSVSKLKPTFSNDSRSLSSYAPTVREPVPVPKSNSGFRFPFMRNKPAEQAPENPFRDPENPFKDPASAPAPNPWSINDVQANNDKKPSRFSWGRS</sequence>